<keyword id="KW-1185">Reference proteome</keyword>
<keyword id="KW-0687">Ribonucleoprotein</keyword>
<keyword id="KW-0689">Ribosomal protein</keyword>
<keyword id="KW-0694">RNA-binding</keyword>
<keyword id="KW-0699">rRNA-binding</keyword>
<reference key="1">
    <citation type="journal article" date="1997" name="J. Bacteriol.">
        <title>Complete genome sequence of Methanobacterium thermoautotrophicum deltaH: functional analysis and comparative genomics.</title>
        <authorList>
            <person name="Smith D.R."/>
            <person name="Doucette-Stamm L.A."/>
            <person name="Deloughery C."/>
            <person name="Lee H.-M."/>
            <person name="Dubois J."/>
            <person name="Aldredge T."/>
            <person name="Bashirzadeh R."/>
            <person name="Blakely D."/>
            <person name="Cook R."/>
            <person name="Gilbert K."/>
            <person name="Harrison D."/>
            <person name="Hoang L."/>
            <person name="Keagle P."/>
            <person name="Lumm W."/>
            <person name="Pothier B."/>
            <person name="Qiu D."/>
            <person name="Spadafora R."/>
            <person name="Vicare R."/>
            <person name="Wang Y."/>
            <person name="Wierzbowski J."/>
            <person name="Gibson R."/>
            <person name="Jiwani N."/>
            <person name="Caruso A."/>
            <person name="Bush D."/>
            <person name="Safer H."/>
            <person name="Patwell D."/>
            <person name="Prabhakar S."/>
            <person name="McDougall S."/>
            <person name="Shimer G."/>
            <person name="Goyal A."/>
            <person name="Pietrovski S."/>
            <person name="Church G.M."/>
            <person name="Daniels C.J."/>
            <person name="Mao J.-I."/>
            <person name="Rice P."/>
            <person name="Noelling J."/>
            <person name="Reeve J.N."/>
        </authorList>
    </citation>
    <scope>NUCLEOTIDE SEQUENCE [LARGE SCALE GENOMIC DNA]</scope>
    <source>
        <strain>ATCC 29096 / DSM 1053 / JCM 10044 / NBRC 100330 / Delta H</strain>
    </source>
</reference>
<name>RL19E_METTH</name>
<evidence type="ECO:0000255" key="1">
    <source>
        <dbReference type="HAMAP-Rule" id="MF_01475"/>
    </source>
</evidence>
<evidence type="ECO:0000256" key="2">
    <source>
        <dbReference type="SAM" id="MobiDB-lite"/>
    </source>
</evidence>
<evidence type="ECO:0000305" key="3"/>
<comment type="function">
    <text evidence="1">Binds to the 23S rRNA.</text>
</comment>
<comment type="subunit">
    <text evidence="1">Part of the 50S ribosomal subunit.</text>
</comment>
<comment type="similarity">
    <text evidence="1">Belongs to the eukaryotic ribosomal protein eL19 family.</text>
</comment>
<proteinExistence type="inferred from homology"/>
<organism>
    <name type="scientific">Methanothermobacter thermautotrophicus (strain ATCC 29096 / DSM 1053 / JCM 10044 / NBRC 100330 / Delta H)</name>
    <name type="common">Methanobacterium thermoautotrophicum</name>
    <dbReference type="NCBI Taxonomy" id="187420"/>
    <lineage>
        <taxon>Archaea</taxon>
        <taxon>Methanobacteriati</taxon>
        <taxon>Methanobacteriota</taxon>
        <taxon>Methanomada group</taxon>
        <taxon>Methanobacteria</taxon>
        <taxon>Methanobacteriales</taxon>
        <taxon>Methanobacteriaceae</taxon>
        <taxon>Methanothermobacter</taxon>
    </lineage>
</organism>
<sequence length="148" mass="17120">MNLTTQKRLAADILKVGVNRIWIDPERIDEVSRAITRDGVKQLIKDGAIKAKPKKGISSYRSKKIAQQKKKGRRRGPGSIKGAKGARRPKKDEWMTTIRALRKDLKEMRDNREINKSTYRKLYKMAKGGAFKSKSYMKTYARDHDMLR</sequence>
<accession>O26129</accession>
<feature type="chain" id="PRO_0000131190" description="Large ribosomal subunit protein eL19">
    <location>
        <begin position="1"/>
        <end position="148"/>
    </location>
</feature>
<feature type="region of interest" description="Disordered" evidence="2">
    <location>
        <begin position="52"/>
        <end position="95"/>
    </location>
</feature>
<feature type="compositionally biased region" description="Basic residues" evidence="2">
    <location>
        <begin position="52"/>
        <end position="76"/>
    </location>
</feature>
<dbReference type="EMBL" id="AE000666">
    <property type="protein sequence ID" value="AAB84530.1"/>
    <property type="molecule type" value="Genomic_DNA"/>
</dbReference>
<dbReference type="PIR" id="G69125">
    <property type="entry name" value="G69125"/>
</dbReference>
<dbReference type="RefSeq" id="WP_010875663.1">
    <property type="nucleotide sequence ID" value="NC_000916.1"/>
</dbReference>
<dbReference type="SMR" id="O26129"/>
<dbReference type="FunCoup" id="O26129">
    <property type="interactions" value="165"/>
</dbReference>
<dbReference type="STRING" id="187420.MTH_21"/>
<dbReference type="PaxDb" id="187420-MTH_21"/>
<dbReference type="EnsemblBacteria" id="AAB84530">
    <property type="protein sequence ID" value="AAB84530"/>
    <property type="gene ID" value="MTH_21"/>
</dbReference>
<dbReference type="KEGG" id="mth:MTH_21"/>
<dbReference type="PATRIC" id="fig|187420.15.peg.21"/>
<dbReference type="HOGENOM" id="CLU_083919_1_1_2"/>
<dbReference type="InParanoid" id="O26129"/>
<dbReference type="Proteomes" id="UP000005223">
    <property type="component" value="Chromosome"/>
</dbReference>
<dbReference type="GO" id="GO:0022625">
    <property type="term" value="C:cytosolic large ribosomal subunit"/>
    <property type="evidence" value="ECO:0007669"/>
    <property type="project" value="InterPro"/>
</dbReference>
<dbReference type="GO" id="GO:0070180">
    <property type="term" value="F:large ribosomal subunit rRNA binding"/>
    <property type="evidence" value="ECO:0007669"/>
    <property type="project" value="UniProtKB-UniRule"/>
</dbReference>
<dbReference type="GO" id="GO:0003735">
    <property type="term" value="F:structural constituent of ribosome"/>
    <property type="evidence" value="ECO:0007669"/>
    <property type="project" value="InterPro"/>
</dbReference>
<dbReference type="GO" id="GO:0006412">
    <property type="term" value="P:translation"/>
    <property type="evidence" value="ECO:0007669"/>
    <property type="project" value="UniProtKB-UniRule"/>
</dbReference>
<dbReference type="CDD" id="cd01418">
    <property type="entry name" value="Ribosomal_L19e_A"/>
    <property type="match status" value="1"/>
</dbReference>
<dbReference type="FunFam" id="1.10.1650.10:FF:000001">
    <property type="entry name" value="Ribosomal protein L19"/>
    <property type="match status" value="1"/>
</dbReference>
<dbReference type="Gene3D" id="1.10.1200.240">
    <property type="match status" value="1"/>
</dbReference>
<dbReference type="Gene3D" id="1.10.1650.10">
    <property type="match status" value="1"/>
</dbReference>
<dbReference type="HAMAP" id="MF_01475">
    <property type="entry name" value="Ribosomal_eL19"/>
    <property type="match status" value="1"/>
</dbReference>
<dbReference type="InterPro" id="IPR035970">
    <property type="entry name" value="60S_ribosomal_eL19_sf"/>
</dbReference>
<dbReference type="InterPro" id="IPR039547">
    <property type="entry name" value="Ribosomal_eL19"/>
</dbReference>
<dbReference type="InterPro" id="IPR033936">
    <property type="entry name" value="Ribosomal_eL19_arc"/>
</dbReference>
<dbReference type="InterPro" id="IPR023638">
    <property type="entry name" value="Ribosomal_eL19_CS"/>
</dbReference>
<dbReference type="InterPro" id="IPR000196">
    <property type="entry name" value="Ribosomal_eL19_dom"/>
</dbReference>
<dbReference type="InterPro" id="IPR015972">
    <property type="entry name" value="Ribosomal_eL19_dom1"/>
</dbReference>
<dbReference type="NCBIfam" id="NF006343">
    <property type="entry name" value="PRK08570.1"/>
    <property type="match status" value="1"/>
</dbReference>
<dbReference type="PANTHER" id="PTHR10722">
    <property type="entry name" value="60S RIBOSOMAL PROTEIN L19"/>
    <property type="match status" value="1"/>
</dbReference>
<dbReference type="Pfam" id="PF01280">
    <property type="entry name" value="Ribosomal_L19e"/>
    <property type="match status" value="1"/>
</dbReference>
<dbReference type="Pfam" id="PF25476">
    <property type="entry name" value="Ribosomal_L19e_C"/>
    <property type="match status" value="1"/>
</dbReference>
<dbReference type="SMART" id="SM01416">
    <property type="entry name" value="Ribosomal_L19e"/>
    <property type="match status" value="1"/>
</dbReference>
<dbReference type="SUPFAM" id="SSF48140">
    <property type="entry name" value="Ribosomal protein L19 (L19e)"/>
    <property type="match status" value="1"/>
</dbReference>
<dbReference type="PROSITE" id="PS00526">
    <property type="entry name" value="RIBOSOMAL_L19E"/>
    <property type="match status" value="1"/>
</dbReference>
<gene>
    <name evidence="1" type="primary">rpl19e</name>
    <name type="ordered locus">MTH_21</name>
</gene>
<protein>
    <recommendedName>
        <fullName evidence="1">Large ribosomal subunit protein eL19</fullName>
    </recommendedName>
    <alternativeName>
        <fullName evidence="3">50S ribosomal protein L19e</fullName>
    </alternativeName>
</protein>